<accession>Q8IVB5</accession>
<accession>Q6AI36</accession>
<protein>
    <recommendedName>
        <fullName>LIX1-like protein</fullName>
    </recommendedName>
</protein>
<comment type="similarity">
    <text evidence="2">Belongs to the LIX1 family.</text>
</comment>
<organism>
    <name type="scientific">Homo sapiens</name>
    <name type="common">Human</name>
    <dbReference type="NCBI Taxonomy" id="9606"/>
    <lineage>
        <taxon>Eukaryota</taxon>
        <taxon>Metazoa</taxon>
        <taxon>Chordata</taxon>
        <taxon>Craniata</taxon>
        <taxon>Vertebrata</taxon>
        <taxon>Euteleostomi</taxon>
        <taxon>Mammalia</taxon>
        <taxon>Eutheria</taxon>
        <taxon>Euarchontoglires</taxon>
        <taxon>Primates</taxon>
        <taxon>Haplorrhini</taxon>
        <taxon>Catarrhini</taxon>
        <taxon>Hominidae</taxon>
        <taxon>Homo</taxon>
    </lineage>
</organism>
<name>LIX1L_HUMAN</name>
<keyword id="KW-1267">Proteomics identification</keyword>
<keyword id="KW-1185">Reference proteome</keyword>
<gene>
    <name type="primary">LIX1L</name>
</gene>
<sequence>METMRAQRLQPGVGTSGRGTLRALRPGVTGAAAATATPPAGPPPAPPPPAPPPPPLLLSGAPGLPLPPGAAGSPAVLREAVEAVVRSFAKHTQGYGRVNVVEALQEFWQMKQSRGADLKNGALVVYEMVPSNSPPYVCYVTLPGGSCFGSFQFCPTKAEARRSAAKIALMNSVFNEHPSRRITDEFIEKSVSEALASFNGNREEADNPNTGIGAFRFMLESNKGKSMLEFQELMTVFQLLHWNGSLKAMRERQCSRQEVLAHYSHRALDDDIRHQMALDWVSREQSVPGALSRELASTERELDEARLAGKELRFHKEKKDILVLAAGQLGNMHSSNC</sequence>
<dbReference type="EMBL" id="BC035727">
    <property type="protein sequence ID" value="AAH35727.1"/>
    <property type="molecule type" value="mRNA"/>
</dbReference>
<dbReference type="EMBL" id="CR627381">
    <property type="protein sequence ID" value="CAH10478.1"/>
    <property type="molecule type" value="mRNA"/>
</dbReference>
<dbReference type="CCDS" id="CCDS72873.1"/>
<dbReference type="RefSeq" id="NP_714924.1">
    <property type="nucleotide sequence ID" value="NM_153713.3"/>
</dbReference>
<dbReference type="BioGRID" id="126092">
    <property type="interactions" value="12"/>
</dbReference>
<dbReference type="FunCoup" id="Q8IVB5">
    <property type="interactions" value="221"/>
</dbReference>
<dbReference type="IntAct" id="Q8IVB5">
    <property type="interactions" value="8"/>
</dbReference>
<dbReference type="STRING" id="9606.ENSP00000474487"/>
<dbReference type="iPTMnet" id="Q8IVB5"/>
<dbReference type="PhosphoSitePlus" id="Q8IVB5"/>
<dbReference type="BioMuta" id="LIX1L"/>
<dbReference type="DMDM" id="74728055"/>
<dbReference type="jPOST" id="Q8IVB5"/>
<dbReference type="MassIVE" id="Q8IVB5"/>
<dbReference type="PaxDb" id="9606-ENSP00000474487"/>
<dbReference type="PeptideAtlas" id="Q8IVB5"/>
<dbReference type="ProteomicsDB" id="70679"/>
<dbReference type="Pumba" id="Q8IVB5"/>
<dbReference type="TopDownProteomics" id="Q8IVB5"/>
<dbReference type="Antibodypedia" id="73360">
    <property type="antibodies" value="99 antibodies from 19 providers"/>
</dbReference>
<dbReference type="DNASU" id="128077"/>
<dbReference type="Ensembl" id="ENST00000604000.4">
    <property type="protein sequence ID" value="ENSP00000474487.3"/>
    <property type="gene ID" value="ENSG00000271601.4"/>
</dbReference>
<dbReference type="GeneID" id="128077"/>
<dbReference type="KEGG" id="hsa:128077"/>
<dbReference type="MANE-Select" id="ENST00000604000.4">
    <property type="protein sequence ID" value="ENSP00000474487.3"/>
    <property type="RefSeq nucleotide sequence ID" value="NM_153713.3"/>
    <property type="RefSeq protein sequence ID" value="NP_714924.1"/>
</dbReference>
<dbReference type="UCSC" id="uc001enr.5">
    <property type="organism name" value="human"/>
</dbReference>
<dbReference type="AGR" id="HGNC:28715"/>
<dbReference type="CTD" id="128077"/>
<dbReference type="DisGeNET" id="128077"/>
<dbReference type="GeneCards" id="LIX1L"/>
<dbReference type="HGNC" id="HGNC:28715">
    <property type="gene designation" value="LIX1L"/>
</dbReference>
<dbReference type="HPA" id="ENSG00000271601">
    <property type="expression patterns" value="Low tissue specificity"/>
</dbReference>
<dbReference type="neXtProt" id="NX_Q8IVB5"/>
<dbReference type="OpenTargets" id="ENSG00000271601"/>
<dbReference type="PharmGKB" id="PA134915428"/>
<dbReference type="VEuPathDB" id="HostDB:ENSG00000271601"/>
<dbReference type="eggNOG" id="ENOG502QR91">
    <property type="taxonomic scope" value="Eukaryota"/>
</dbReference>
<dbReference type="GeneTree" id="ENSGT00390000005869"/>
<dbReference type="HOGENOM" id="CLU_065651_0_1_1"/>
<dbReference type="InParanoid" id="Q8IVB5"/>
<dbReference type="OMA" id="MDWVSRE"/>
<dbReference type="OrthoDB" id="6250996at2759"/>
<dbReference type="PAN-GO" id="Q8IVB5">
    <property type="GO annotations" value="2 GO annotations based on evolutionary models"/>
</dbReference>
<dbReference type="PhylomeDB" id="Q8IVB5"/>
<dbReference type="TreeFam" id="TF324035"/>
<dbReference type="PathwayCommons" id="Q8IVB5"/>
<dbReference type="SignaLink" id="Q8IVB5"/>
<dbReference type="BioGRID-ORCS" id="128077">
    <property type="hits" value="14 hits in 1147 CRISPR screens"/>
</dbReference>
<dbReference type="ChiTaRS" id="LIX1L">
    <property type="organism name" value="human"/>
</dbReference>
<dbReference type="GenomeRNAi" id="128077"/>
<dbReference type="Pharos" id="Q8IVB5">
    <property type="development level" value="Tdark"/>
</dbReference>
<dbReference type="PRO" id="PR:Q8IVB5"/>
<dbReference type="Proteomes" id="UP000005640">
    <property type="component" value="Chromosome 1"/>
</dbReference>
<dbReference type="RNAct" id="Q8IVB5">
    <property type="molecule type" value="protein"/>
</dbReference>
<dbReference type="Bgee" id="ENSG00000271601">
    <property type="expression patterns" value="Expressed in tibialis anterior and 190 other cell types or tissues"/>
</dbReference>
<dbReference type="GO" id="GO:0005737">
    <property type="term" value="C:cytoplasm"/>
    <property type="evidence" value="ECO:0000318"/>
    <property type="project" value="GO_Central"/>
</dbReference>
<dbReference type="GO" id="GO:0097352">
    <property type="term" value="P:autophagosome maturation"/>
    <property type="evidence" value="ECO:0000318"/>
    <property type="project" value="GO_Central"/>
</dbReference>
<dbReference type="CDD" id="cd00048">
    <property type="entry name" value="DSRM_SF"/>
    <property type="match status" value="1"/>
</dbReference>
<dbReference type="InterPro" id="IPR051436">
    <property type="entry name" value="Autophagy-related_EPG5"/>
</dbReference>
<dbReference type="InterPro" id="IPR029270">
    <property type="entry name" value="LIX1"/>
</dbReference>
<dbReference type="PANTHER" id="PTHR31139">
    <property type="entry name" value="ECTOPIC P GRANULES PROTEIN 5 HOMOLOG"/>
    <property type="match status" value="1"/>
</dbReference>
<dbReference type="PANTHER" id="PTHR31139:SF6">
    <property type="entry name" value="PROTEIN LIMB EXPRESSION 1 HOMOLOG"/>
    <property type="match status" value="1"/>
</dbReference>
<dbReference type="Pfam" id="PF14954">
    <property type="entry name" value="LIX1"/>
    <property type="match status" value="1"/>
</dbReference>
<dbReference type="SUPFAM" id="SSF54768">
    <property type="entry name" value="dsRNA-binding domain-like"/>
    <property type="match status" value="1"/>
</dbReference>
<feature type="chain" id="PRO_0000232872" description="LIX1-like protein">
    <location>
        <begin position="1"/>
        <end position="337"/>
    </location>
</feature>
<feature type="region of interest" description="Disordered" evidence="1">
    <location>
        <begin position="1"/>
        <end position="64"/>
    </location>
</feature>
<feature type="compositionally biased region" description="Low complexity" evidence="1">
    <location>
        <begin position="26"/>
        <end position="38"/>
    </location>
</feature>
<feature type="compositionally biased region" description="Pro residues" evidence="1">
    <location>
        <begin position="39"/>
        <end position="56"/>
    </location>
</feature>
<proteinExistence type="evidence at protein level"/>
<evidence type="ECO:0000256" key="1">
    <source>
        <dbReference type="SAM" id="MobiDB-lite"/>
    </source>
</evidence>
<evidence type="ECO:0000305" key="2"/>
<reference key="1">
    <citation type="journal article" date="2004" name="Genome Res.">
        <title>The status, quality, and expansion of the NIH full-length cDNA project: the Mammalian Gene Collection (MGC).</title>
        <authorList>
            <consortium name="The MGC Project Team"/>
        </authorList>
    </citation>
    <scope>NUCLEOTIDE SEQUENCE [LARGE SCALE MRNA]</scope>
    <source>
        <tissue>Ovary</tissue>
    </source>
</reference>
<reference key="2">
    <citation type="journal article" date="2007" name="BMC Genomics">
        <title>The full-ORF clone resource of the German cDNA consortium.</title>
        <authorList>
            <person name="Bechtel S."/>
            <person name="Rosenfelder H."/>
            <person name="Duda A."/>
            <person name="Schmidt C.P."/>
            <person name="Ernst U."/>
            <person name="Wellenreuther R."/>
            <person name="Mehrle A."/>
            <person name="Schuster C."/>
            <person name="Bahr A."/>
            <person name="Bloecker H."/>
            <person name="Heubner D."/>
            <person name="Hoerlein A."/>
            <person name="Michel G."/>
            <person name="Wedler H."/>
            <person name="Koehrer K."/>
            <person name="Ottenwaelder B."/>
            <person name="Poustka A."/>
            <person name="Wiemann S."/>
            <person name="Schupp I."/>
        </authorList>
    </citation>
    <scope>NUCLEOTIDE SEQUENCE [LARGE SCALE MRNA] OF 95-337</scope>
    <source>
        <tissue>Melanoma</tissue>
    </source>
</reference>